<proteinExistence type="predicted"/>
<evidence type="ECO:0000255" key="1"/>
<evidence type="ECO:0000305" key="2"/>
<keyword id="KW-0472">Membrane</keyword>
<keyword id="KW-1185">Reference proteome</keyword>
<keyword id="KW-0812">Transmembrane</keyword>
<keyword id="KW-1133">Transmembrane helix</keyword>
<organism>
    <name type="scientific">Saccharomyces cerevisiae (strain ATCC 204508 / S288c)</name>
    <name type="common">Baker's yeast</name>
    <dbReference type="NCBI Taxonomy" id="559292"/>
    <lineage>
        <taxon>Eukaryota</taxon>
        <taxon>Fungi</taxon>
        <taxon>Dikarya</taxon>
        <taxon>Ascomycota</taxon>
        <taxon>Saccharomycotina</taxon>
        <taxon>Saccharomycetes</taxon>
        <taxon>Saccharomycetales</taxon>
        <taxon>Saccharomycetaceae</taxon>
        <taxon>Saccharomyces</taxon>
    </lineage>
</organism>
<sequence length="111" mass="13397">MTKSIYIIIGYMLHDEEFFYFFFISFYTLWIVFFLLHLSFFSTLSFGIFHDFDTDVYIKVGNYILHFLELSKNSNLLKNSSEMLKHFRLASLMYMYVYTQMICPSLLGIRN</sequence>
<accession>P38834</accession>
<accession>A0A1S0SZP5</accession>
<comment type="subcellular location">
    <subcellularLocation>
        <location evidence="2">Membrane</location>
        <topology evidence="2">Single-pass membrane protein</topology>
    </subcellularLocation>
</comment>
<dbReference type="EMBL" id="U10398">
    <property type="protein sequence ID" value="AAB68413.1"/>
    <property type="molecule type" value="Genomic_DNA"/>
</dbReference>
<dbReference type="EMBL" id="BK006934">
    <property type="protein sequence ID" value="DAA80261.1"/>
    <property type="molecule type" value="Genomic_DNA"/>
</dbReference>
<dbReference type="PIR" id="S48974">
    <property type="entry name" value="S48974"/>
</dbReference>
<dbReference type="RefSeq" id="NP_001335741.1">
    <property type="nucleotide sequence ID" value="NM_001348825.1"/>
</dbReference>
<dbReference type="SMR" id="P38834"/>
<dbReference type="DIP" id="DIP-5099N"/>
<dbReference type="FunCoup" id="P38834">
    <property type="interactions" value="23"/>
</dbReference>
<dbReference type="IntAct" id="P38834">
    <property type="interactions" value="2"/>
</dbReference>
<dbReference type="MINT" id="P38834"/>
<dbReference type="PaxDb" id="4932-YHR130C"/>
<dbReference type="EnsemblFungi" id="YHR130C_mRNA">
    <property type="protein sequence ID" value="YHR130C"/>
    <property type="gene ID" value="YHR130C"/>
</dbReference>
<dbReference type="GeneID" id="856531"/>
<dbReference type="AGR" id="SGD:S000001172"/>
<dbReference type="SGD" id="S000001172">
    <property type="gene designation" value="YHR130C"/>
</dbReference>
<dbReference type="HOGENOM" id="CLU_2160372_0_0_1"/>
<dbReference type="InParanoid" id="P38834"/>
<dbReference type="PRO" id="PR:P38834"/>
<dbReference type="Proteomes" id="UP000002311">
    <property type="component" value="Chromosome VIII"/>
</dbReference>
<dbReference type="RNAct" id="P38834">
    <property type="molecule type" value="protein"/>
</dbReference>
<dbReference type="GO" id="GO:0016020">
    <property type="term" value="C:membrane"/>
    <property type="evidence" value="ECO:0007669"/>
    <property type="project" value="UniProtKB-SubCell"/>
</dbReference>
<reference key="1">
    <citation type="journal article" date="1994" name="Science">
        <title>Complete nucleotide sequence of Saccharomyces cerevisiae chromosome VIII.</title>
        <authorList>
            <person name="Johnston M."/>
            <person name="Andrews S."/>
            <person name="Brinkman R."/>
            <person name="Cooper J."/>
            <person name="Ding H."/>
            <person name="Dover J."/>
            <person name="Du Z."/>
            <person name="Favello A."/>
            <person name="Fulton L."/>
            <person name="Gattung S."/>
            <person name="Geisel C."/>
            <person name="Kirsten J."/>
            <person name="Kucaba T."/>
            <person name="Hillier L.W."/>
            <person name="Jier M."/>
            <person name="Johnston L."/>
            <person name="Langston Y."/>
            <person name="Latreille P."/>
            <person name="Louis E.J."/>
            <person name="Macri C."/>
            <person name="Mardis E."/>
            <person name="Menezes S."/>
            <person name="Mouser L."/>
            <person name="Nhan M."/>
            <person name="Rifkin L."/>
            <person name="Riles L."/>
            <person name="St Peter H."/>
            <person name="Trevaskis E."/>
            <person name="Vaughan K."/>
            <person name="Vignati D."/>
            <person name="Wilcox L."/>
            <person name="Wohldman P."/>
            <person name="Waterston R."/>
            <person name="Wilson R."/>
            <person name="Vaudin M."/>
        </authorList>
    </citation>
    <scope>NUCLEOTIDE SEQUENCE [LARGE SCALE GENOMIC DNA]</scope>
    <source>
        <strain>ATCC 204508 / S288c</strain>
    </source>
</reference>
<reference key="2">
    <citation type="journal article" date="2014" name="G3 (Bethesda)">
        <title>The reference genome sequence of Saccharomyces cerevisiae: Then and now.</title>
        <authorList>
            <person name="Engel S.R."/>
            <person name="Dietrich F.S."/>
            <person name="Fisk D.G."/>
            <person name="Binkley G."/>
            <person name="Balakrishnan R."/>
            <person name="Costanzo M.C."/>
            <person name="Dwight S.S."/>
            <person name="Hitz B.C."/>
            <person name="Karra K."/>
            <person name="Nash R.S."/>
            <person name="Weng S."/>
            <person name="Wong E.D."/>
            <person name="Lloyd P."/>
            <person name="Skrzypek M.S."/>
            <person name="Miyasato S.R."/>
            <person name="Simison M."/>
            <person name="Cherry J.M."/>
        </authorList>
    </citation>
    <scope>GENOME REANNOTATION</scope>
    <source>
        <strain>ATCC 204508 / S288c</strain>
    </source>
</reference>
<feature type="chain" id="PRO_0000202916" description="Uncharacterized protein YHR130C">
    <location>
        <begin position="1"/>
        <end position="111"/>
    </location>
</feature>
<feature type="transmembrane region" description="Helical" evidence="1">
    <location>
        <begin position="18"/>
        <end position="41"/>
    </location>
</feature>
<name>YHT0_YEAST</name>
<protein>
    <recommendedName>
        <fullName>Uncharacterized protein YHR130C</fullName>
    </recommendedName>
</protein>
<gene>
    <name type="ordered locus">YHR130C</name>
</gene>